<accession>Q0VLA8</accession>
<dbReference type="EC" id="1.4.4.2" evidence="1"/>
<dbReference type="EMBL" id="AM286690">
    <property type="protein sequence ID" value="CAL18040.1"/>
    <property type="molecule type" value="Genomic_DNA"/>
</dbReference>
<dbReference type="RefSeq" id="WP_011589863.1">
    <property type="nucleotide sequence ID" value="NC_008260.1"/>
</dbReference>
<dbReference type="SMR" id="Q0VLA8"/>
<dbReference type="STRING" id="393595.ABO_2592"/>
<dbReference type="KEGG" id="abo:ABO_2592"/>
<dbReference type="eggNOG" id="COG0403">
    <property type="taxonomic scope" value="Bacteria"/>
</dbReference>
<dbReference type="HOGENOM" id="CLU_004620_0_2_6"/>
<dbReference type="OrthoDB" id="9801272at2"/>
<dbReference type="Proteomes" id="UP000008871">
    <property type="component" value="Chromosome"/>
</dbReference>
<dbReference type="GO" id="GO:0004375">
    <property type="term" value="F:glycine dehydrogenase (decarboxylating) activity"/>
    <property type="evidence" value="ECO:0007669"/>
    <property type="project" value="UniProtKB-EC"/>
</dbReference>
<dbReference type="GO" id="GO:0019464">
    <property type="term" value="P:glycine decarboxylation via glycine cleavage system"/>
    <property type="evidence" value="ECO:0007669"/>
    <property type="project" value="UniProtKB-UniRule"/>
</dbReference>
<dbReference type="GO" id="GO:0009116">
    <property type="term" value="P:nucleoside metabolic process"/>
    <property type="evidence" value="ECO:0007669"/>
    <property type="project" value="InterPro"/>
</dbReference>
<dbReference type="CDD" id="cd00613">
    <property type="entry name" value="GDC-P"/>
    <property type="match status" value="1"/>
</dbReference>
<dbReference type="Gene3D" id="3.90.1150.10">
    <property type="entry name" value="Aspartate Aminotransferase, domain 1"/>
    <property type="match status" value="1"/>
</dbReference>
<dbReference type="Gene3D" id="3.40.640.10">
    <property type="entry name" value="Type I PLP-dependent aspartate aminotransferase-like (Major domain)"/>
    <property type="match status" value="1"/>
</dbReference>
<dbReference type="HAMAP" id="MF_00712">
    <property type="entry name" value="GcvPA"/>
    <property type="match status" value="1"/>
</dbReference>
<dbReference type="InterPro" id="IPR023010">
    <property type="entry name" value="GcvPA"/>
</dbReference>
<dbReference type="InterPro" id="IPR049315">
    <property type="entry name" value="GDC-P_N"/>
</dbReference>
<dbReference type="InterPro" id="IPR020581">
    <property type="entry name" value="GDC_P"/>
</dbReference>
<dbReference type="InterPro" id="IPR015424">
    <property type="entry name" value="PyrdxlP-dep_Trfase"/>
</dbReference>
<dbReference type="InterPro" id="IPR015421">
    <property type="entry name" value="PyrdxlP-dep_Trfase_major"/>
</dbReference>
<dbReference type="InterPro" id="IPR015422">
    <property type="entry name" value="PyrdxlP-dep_Trfase_small"/>
</dbReference>
<dbReference type="NCBIfam" id="NF001696">
    <property type="entry name" value="PRK00451.1"/>
    <property type="match status" value="1"/>
</dbReference>
<dbReference type="PANTHER" id="PTHR42806">
    <property type="entry name" value="GLYCINE CLEAVAGE SYSTEM P-PROTEIN"/>
    <property type="match status" value="1"/>
</dbReference>
<dbReference type="PANTHER" id="PTHR42806:SF1">
    <property type="entry name" value="GLYCINE DEHYDROGENASE (DECARBOXYLATING)"/>
    <property type="match status" value="1"/>
</dbReference>
<dbReference type="Pfam" id="PF02347">
    <property type="entry name" value="GDC-P"/>
    <property type="match status" value="1"/>
</dbReference>
<dbReference type="PIRSF" id="PIRSF006815">
    <property type="entry name" value="GcvPA"/>
    <property type="match status" value="1"/>
</dbReference>
<dbReference type="SUPFAM" id="SSF53383">
    <property type="entry name" value="PLP-dependent transferases"/>
    <property type="match status" value="1"/>
</dbReference>
<name>GCSPA_ALCBS</name>
<comment type="function">
    <text evidence="1">The glycine cleavage system catalyzes the degradation of glycine. The P protein binds the alpha-amino group of glycine through its pyridoxal phosphate cofactor; CO(2) is released and the remaining methylamine moiety is then transferred to the lipoamide cofactor of the H protein.</text>
</comment>
<comment type="catalytic activity">
    <reaction evidence="1">
        <text>N(6)-[(R)-lipoyl]-L-lysyl-[glycine-cleavage complex H protein] + glycine + H(+) = N(6)-[(R)-S(8)-aminomethyldihydrolipoyl]-L-lysyl-[glycine-cleavage complex H protein] + CO2</text>
        <dbReference type="Rhea" id="RHEA:24304"/>
        <dbReference type="Rhea" id="RHEA-COMP:10494"/>
        <dbReference type="Rhea" id="RHEA-COMP:10495"/>
        <dbReference type="ChEBI" id="CHEBI:15378"/>
        <dbReference type="ChEBI" id="CHEBI:16526"/>
        <dbReference type="ChEBI" id="CHEBI:57305"/>
        <dbReference type="ChEBI" id="CHEBI:83099"/>
        <dbReference type="ChEBI" id="CHEBI:83143"/>
        <dbReference type="EC" id="1.4.4.2"/>
    </reaction>
</comment>
<comment type="subunit">
    <text evidence="1">The glycine cleavage system is composed of four proteins: P, T, L and H. In this organism, the P 'protein' is a heterodimer of two subunits.</text>
</comment>
<comment type="similarity">
    <text evidence="1">Belongs to the GcvP family. N-terminal subunit subfamily.</text>
</comment>
<gene>
    <name evidence="1" type="primary">gcvPA</name>
    <name type="ordered locus">ABO_2592</name>
</gene>
<sequence length="452" mass="48258">MPYIPHTPDDVRAMLDAIGADSIEDLFDEIPSHLKAAGKLDALPEGLSEMDVTRLMSDRAAQDAGAVSFIGAGAYQHHVPAAVWEIATRGEFYTAYTPYQAEASQGTLQVIYEFQTLMTRLTGMDVSNASVYDGASGLAEAVLMSLRANRKSKSRKVLVPTAVNPRYTSATQAIVENQDVALERVGFDAASGQTPLDALKPYEGEDYAALVISQPNFFGSLEEVDALTDWAHANKMLVIGVVNPTSLALLTPPGEWGADGADIVVGEGQPLGVPLSSGGPYFGFMCCKQKHVRQMPGRIIGRTVDMEGKQGFTLTLQAREQHIRRSKATSNICTNQGLAMTAATIYTSLLGPDGLGNVAAHCHANTQALADKLTAIDGVERAFTAPTFHEVVLTLPKPADQVLAALAEKDVLGGVSLAGDYDMNNAILVNATEVHSEQDLQLFEQALKEVLA</sequence>
<reference key="1">
    <citation type="journal article" date="2006" name="Nat. Biotechnol.">
        <title>Genome sequence of the ubiquitous hydrocarbon-degrading marine bacterium Alcanivorax borkumensis.</title>
        <authorList>
            <person name="Schneiker S."/>
            <person name="Martins dos Santos V.A.P."/>
            <person name="Bartels D."/>
            <person name="Bekel T."/>
            <person name="Brecht M."/>
            <person name="Buhrmester J."/>
            <person name="Chernikova T.N."/>
            <person name="Denaro R."/>
            <person name="Ferrer M."/>
            <person name="Gertler C."/>
            <person name="Goesmann A."/>
            <person name="Golyshina O.V."/>
            <person name="Kaminski F."/>
            <person name="Khachane A.N."/>
            <person name="Lang S."/>
            <person name="Linke B."/>
            <person name="McHardy A.C."/>
            <person name="Meyer F."/>
            <person name="Nechitaylo T."/>
            <person name="Puehler A."/>
            <person name="Regenhardt D."/>
            <person name="Rupp O."/>
            <person name="Sabirova J.S."/>
            <person name="Selbitschka W."/>
            <person name="Yakimov M.M."/>
            <person name="Timmis K.N."/>
            <person name="Vorhoelter F.-J."/>
            <person name="Weidner S."/>
            <person name="Kaiser O."/>
            <person name="Golyshin P.N."/>
        </authorList>
    </citation>
    <scope>NUCLEOTIDE SEQUENCE [LARGE SCALE GENOMIC DNA]</scope>
    <source>
        <strain>ATCC 700651 / DSM 11573 / NCIMB 13689 / SK2</strain>
    </source>
</reference>
<feature type="chain" id="PRO_1000045634" description="Probable glycine dehydrogenase (decarboxylating) subunit 1">
    <location>
        <begin position="1"/>
        <end position="452"/>
    </location>
</feature>
<protein>
    <recommendedName>
        <fullName evidence="1">Probable glycine dehydrogenase (decarboxylating) subunit 1</fullName>
        <ecNumber evidence="1">1.4.4.2</ecNumber>
    </recommendedName>
    <alternativeName>
        <fullName evidence="1">Glycine cleavage system P-protein subunit 1</fullName>
    </alternativeName>
    <alternativeName>
        <fullName evidence="1">Glycine decarboxylase subunit 1</fullName>
    </alternativeName>
    <alternativeName>
        <fullName evidence="1">Glycine dehydrogenase (aminomethyl-transferring) subunit 1</fullName>
    </alternativeName>
</protein>
<keyword id="KW-0560">Oxidoreductase</keyword>
<keyword id="KW-1185">Reference proteome</keyword>
<organism>
    <name type="scientific">Alcanivorax borkumensis (strain ATCC 700651 / DSM 11573 / NCIMB 13689 / SK2)</name>
    <dbReference type="NCBI Taxonomy" id="393595"/>
    <lineage>
        <taxon>Bacteria</taxon>
        <taxon>Pseudomonadati</taxon>
        <taxon>Pseudomonadota</taxon>
        <taxon>Gammaproteobacteria</taxon>
        <taxon>Oceanospirillales</taxon>
        <taxon>Alcanivoracaceae</taxon>
        <taxon>Alcanivorax</taxon>
    </lineage>
</organism>
<evidence type="ECO:0000255" key="1">
    <source>
        <dbReference type="HAMAP-Rule" id="MF_00712"/>
    </source>
</evidence>
<proteinExistence type="inferred from homology"/>